<dbReference type="EMBL" id="AC074354">
    <property type="protein sequence ID" value="AAK92582.1"/>
    <property type="molecule type" value="Genomic_DNA"/>
</dbReference>
<dbReference type="EMBL" id="DP000086">
    <property type="protein sequence ID" value="AAP52952.1"/>
    <property type="molecule type" value="Genomic_DNA"/>
</dbReference>
<dbReference type="EMBL" id="AP008216">
    <property type="protein sequence ID" value="BAF26260.1"/>
    <property type="status" value="ALT_SEQ"/>
    <property type="molecule type" value="Genomic_DNA"/>
</dbReference>
<dbReference type="EMBL" id="AP014966">
    <property type="status" value="NOT_ANNOTATED_CDS"/>
    <property type="molecule type" value="Genomic_DNA"/>
</dbReference>
<dbReference type="EMBL" id="CM000147">
    <property type="protein sequence ID" value="EAZ15646.1"/>
    <property type="molecule type" value="Genomic_DNA"/>
</dbReference>
<dbReference type="SMR" id="Q7XFU9"/>
<dbReference type="STRING" id="39947.Q7XFU9"/>
<dbReference type="PaxDb" id="39947-Q7XFU9"/>
<dbReference type="InParanoid" id="Q7XFU9"/>
<dbReference type="Proteomes" id="UP000000763">
    <property type="component" value="Chromosome 10"/>
</dbReference>
<dbReference type="Proteomes" id="UP000007752">
    <property type="component" value="Chromosome 10"/>
</dbReference>
<dbReference type="Proteomes" id="UP000059680">
    <property type="component" value="Chromosome 10"/>
</dbReference>
<dbReference type="GO" id="GO:0005634">
    <property type="term" value="C:nucleus"/>
    <property type="evidence" value="ECO:0007669"/>
    <property type="project" value="UniProtKB-SubCell"/>
</dbReference>
<dbReference type="GO" id="GO:0003677">
    <property type="term" value="F:DNA binding"/>
    <property type="evidence" value="ECO:0007669"/>
    <property type="project" value="UniProtKB-KW"/>
</dbReference>
<dbReference type="Gene3D" id="2.40.330.10">
    <property type="entry name" value="DNA-binding pseudobarrel domain"/>
    <property type="match status" value="2"/>
</dbReference>
<dbReference type="InterPro" id="IPR003340">
    <property type="entry name" value="B3_DNA-bd"/>
</dbReference>
<dbReference type="InterPro" id="IPR015300">
    <property type="entry name" value="DNA-bd_pseudobarrel_sf"/>
</dbReference>
<dbReference type="InterPro" id="IPR050655">
    <property type="entry name" value="Plant_B3_domain"/>
</dbReference>
<dbReference type="PANTHER" id="PTHR31920">
    <property type="entry name" value="B3 DOMAIN-CONTAINING"/>
    <property type="match status" value="1"/>
</dbReference>
<dbReference type="PANTHER" id="PTHR31920:SF122">
    <property type="entry name" value="B3 DOMAIN-CONTAINING PROTEIN REM23"/>
    <property type="match status" value="1"/>
</dbReference>
<dbReference type="Pfam" id="PF02362">
    <property type="entry name" value="B3"/>
    <property type="match status" value="1"/>
</dbReference>
<dbReference type="SUPFAM" id="SSF101936">
    <property type="entry name" value="DNA-binding pseudobarrel domain"/>
    <property type="match status" value="2"/>
</dbReference>
<dbReference type="PROSITE" id="PS50863">
    <property type="entry name" value="B3"/>
    <property type="match status" value="2"/>
</dbReference>
<reference key="1">
    <citation type="journal article" date="2003" name="Science">
        <title>In-depth view of structure, activity, and evolution of rice chromosome 10.</title>
        <authorList>
            <person name="Yu Y."/>
            <person name="Rambo T."/>
            <person name="Currie J."/>
            <person name="Saski C."/>
            <person name="Kim H.-R."/>
            <person name="Collura K."/>
            <person name="Thompson S."/>
            <person name="Simmons J."/>
            <person name="Yang T.-J."/>
            <person name="Nah G."/>
            <person name="Patel A.J."/>
            <person name="Thurmond S."/>
            <person name="Henry D."/>
            <person name="Oates R."/>
            <person name="Palmer M."/>
            <person name="Pries G."/>
            <person name="Gibson J."/>
            <person name="Anderson H."/>
            <person name="Paradkar M."/>
            <person name="Crane L."/>
            <person name="Dale J."/>
            <person name="Carver M.B."/>
            <person name="Wood T."/>
            <person name="Frisch D."/>
            <person name="Engler F."/>
            <person name="Soderlund C."/>
            <person name="Palmer L.E."/>
            <person name="Teytelman L."/>
            <person name="Nascimento L."/>
            <person name="De la Bastide M."/>
            <person name="Spiegel L."/>
            <person name="Ware D."/>
            <person name="O'Shaughnessy A."/>
            <person name="Dike S."/>
            <person name="Dedhia N."/>
            <person name="Preston R."/>
            <person name="Huang E."/>
            <person name="Ferraro K."/>
            <person name="Kuit K."/>
            <person name="Miller B."/>
            <person name="Zutavern T."/>
            <person name="Katzenberger F."/>
            <person name="Muller S."/>
            <person name="Balija V."/>
            <person name="Martienssen R.A."/>
            <person name="Stein L."/>
            <person name="Minx P."/>
            <person name="Johnson D."/>
            <person name="Cordum H."/>
            <person name="Mardis E."/>
            <person name="Cheng Z."/>
            <person name="Jiang J."/>
            <person name="Wilson R."/>
            <person name="McCombie W.R."/>
            <person name="Wing R.A."/>
            <person name="Yuan Q."/>
            <person name="Ouyang S."/>
            <person name="Liu J."/>
            <person name="Jones K.M."/>
            <person name="Gansberger K."/>
            <person name="Moffat K."/>
            <person name="Hill J."/>
            <person name="Tsitrin T."/>
            <person name="Overton L."/>
            <person name="Bera J."/>
            <person name="Kim M."/>
            <person name="Jin S."/>
            <person name="Tallon L."/>
            <person name="Ciecko A."/>
            <person name="Pai G."/>
            <person name="Van Aken S."/>
            <person name="Utterback T."/>
            <person name="Reidmuller S."/>
            <person name="Bormann J."/>
            <person name="Feldblyum T."/>
            <person name="Hsiao J."/>
            <person name="Zismann V."/>
            <person name="Blunt S."/>
            <person name="de Vazeille A.R."/>
            <person name="Shaffer T."/>
            <person name="Koo H."/>
            <person name="Suh B."/>
            <person name="Yang Q."/>
            <person name="Haas B."/>
            <person name="Peterson J."/>
            <person name="Pertea M."/>
            <person name="Volfovsky N."/>
            <person name="Wortman J."/>
            <person name="White O."/>
            <person name="Salzberg S.L."/>
            <person name="Fraser C.M."/>
            <person name="Buell C.R."/>
            <person name="Messing J."/>
            <person name="Song R."/>
            <person name="Fuks G."/>
            <person name="Llaca V."/>
            <person name="Kovchak S."/>
            <person name="Young S."/>
            <person name="Bowers J.E."/>
            <person name="Paterson A.H."/>
            <person name="Johns M.A."/>
            <person name="Mao L."/>
            <person name="Pan H."/>
            <person name="Dean R.A."/>
        </authorList>
    </citation>
    <scope>NUCLEOTIDE SEQUENCE [LARGE SCALE GENOMIC DNA]</scope>
    <source>
        <strain>cv. Nipponbare</strain>
    </source>
</reference>
<reference key="2">
    <citation type="journal article" date="2005" name="Nature">
        <title>The map-based sequence of the rice genome.</title>
        <authorList>
            <consortium name="International rice genome sequencing project (IRGSP)"/>
        </authorList>
    </citation>
    <scope>NUCLEOTIDE SEQUENCE [LARGE SCALE GENOMIC DNA]</scope>
    <source>
        <strain>cv. Nipponbare</strain>
    </source>
</reference>
<reference key="3">
    <citation type="journal article" date="2008" name="Nucleic Acids Res.">
        <title>The rice annotation project database (RAP-DB): 2008 update.</title>
        <authorList>
            <consortium name="The rice annotation project (RAP)"/>
        </authorList>
    </citation>
    <scope>GENOME REANNOTATION</scope>
    <source>
        <strain>cv. Nipponbare</strain>
    </source>
</reference>
<reference key="4">
    <citation type="journal article" date="2013" name="Rice">
        <title>Improvement of the Oryza sativa Nipponbare reference genome using next generation sequence and optical map data.</title>
        <authorList>
            <person name="Kawahara Y."/>
            <person name="de la Bastide M."/>
            <person name="Hamilton J.P."/>
            <person name="Kanamori H."/>
            <person name="McCombie W.R."/>
            <person name="Ouyang S."/>
            <person name="Schwartz D.C."/>
            <person name="Tanaka T."/>
            <person name="Wu J."/>
            <person name="Zhou S."/>
            <person name="Childs K.L."/>
            <person name="Davidson R.M."/>
            <person name="Lin H."/>
            <person name="Quesada-Ocampo L."/>
            <person name="Vaillancourt B."/>
            <person name="Sakai H."/>
            <person name="Lee S.S."/>
            <person name="Kim J."/>
            <person name="Numa H."/>
            <person name="Itoh T."/>
            <person name="Buell C.R."/>
            <person name="Matsumoto T."/>
        </authorList>
    </citation>
    <scope>GENOME REANNOTATION</scope>
    <source>
        <strain>cv. Nipponbare</strain>
    </source>
</reference>
<reference key="5">
    <citation type="journal article" date="2005" name="PLoS Biol.">
        <title>The genomes of Oryza sativa: a history of duplications.</title>
        <authorList>
            <person name="Yu J."/>
            <person name="Wang J."/>
            <person name="Lin W."/>
            <person name="Li S."/>
            <person name="Li H."/>
            <person name="Zhou J."/>
            <person name="Ni P."/>
            <person name="Dong W."/>
            <person name="Hu S."/>
            <person name="Zeng C."/>
            <person name="Zhang J."/>
            <person name="Zhang Y."/>
            <person name="Li R."/>
            <person name="Xu Z."/>
            <person name="Li S."/>
            <person name="Li X."/>
            <person name="Zheng H."/>
            <person name="Cong L."/>
            <person name="Lin L."/>
            <person name="Yin J."/>
            <person name="Geng J."/>
            <person name="Li G."/>
            <person name="Shi J."/>
            <person name="Liu J."/>
            <person name="Lv H."/>
            <person name="Li J."/>
            <person name="Wang J."/>
            <person name="Deng Y."/>
            <person name="Ran L."/>
            <person name="Shi X."/>
            <person name="Wang X."/>
            <person name="Wu Q."/>
            <person name="Li C."/>
            <person name="Ren X."/>
            <person name="Wang J."/>
            <person name="Wang X."/>
            <person name="Li D."/>
            <person name="Liu D."/>
            <person name="Zhang X."/>
            <person name="Ji Z."/>
            <person name="Zhao W."/>
            <person name="Sun Y."/>
            <person name="Zhang Z."/>
            <person name="Bao J."/>
            <person name="Han Y."/>
            <person name="Dong L."/>
            <person name="Ji J."/>
            <person name="Chen P."/>
            <person name="Wu S."/>
            <person name="Liu J."/>
            <person name="Xiao Y."/>
            <person name="Bu D."/>
            <person name="Tan J."/>
            <person name="Yang L."/>
            <person name="Ye C."/>
            <person name="Zhang J."/>
            <person name="Xu J."/>
            <person name="Zhou Y."/>
            <person name="Yu Y."/>
            <person name="Zhang B."/>
            <person name="Zhuang S."/>
            <person name="Wei H."/>
            <person name="Liu B."/>
            <person name="Lei M."/>
            <person name="Yu H."/>
            <person name="Li Y."/>
            <person name="Xu H."/>
            <person name="Wei S."/>
            <person name="He X."/>
            <person name="Fang L."/>
            <person name="Zhang Z."/>
            <person name="Zhang Y."/>
            <person name="Huang X."/>
            <person name="Su Z."/>
            <person name="Tong W."/>
            <person name="Li J."/>
            <person name="Tong Z."/>
            <person name="Li S."/>
            <person name="Ye J."/>
            <person name="Wang L."/>
            <person name="Fang L."/>
            <person name="Lei T."/>
            <person name="Chen C.-S."/>
            <person name="Chen H.-C."/>
            <person name="Xu Z."/>
            <person name="Li H."/>
            <person name="Huang H."/>
            <person name="Zhang F."/>
            <person name="Xu H."/>
            <person name="Li N."/>
            <person name="Zhao C."/>
            <person name="Li S."/>
            <person name="Dong L."/>
            <person name="Huang Y."/>
            <person name="Li L."/>
            <person name="Xi Y."/>
            <person name="Qi Q."/>
            <person name="Li W."/>
            <person name="Zhang B."/>
            <person name="Hu W."/>
            <person name="Zhang Y."/>
            <person name="Tian X."/>
            <person name="Jiao Y."/>
            <person name="Liang X."/>
            <person name="Jin J."/>
            <person name="Gao L."/>
            <person name="Zheng W."/>
            <person name="Hao B."/>
            <person name="Liu S.-M."/>
            <person name="Wang W."/>
            <person name="Yuan L."/>
            <person name="Cao M."/>
            <person name="McDermott J."/>
            <person name="Samudrala R."/>
            <person name="Wang J."/>
            <person name="Wong G.K.-S."/>
            <person name="Yang H."/>
        </authorList>
    </citation>
    <scope>NUCLEOTIDE SEQUENCE [LARGE SCALE GENOMIC DNA]</scope>
    <source>
        <strain>cv. Nipponbare</strain>
    </source>
</reference>
<keyword id="KW-0238">DNA-binding</keyword>
<keyword id="KW-0539">Nucleus</keyword>
<keyword id="KW-1185">Reference proteome</keyword>
<keyword id="KW-0677">Repeat</keyword>
<keyword id="KW-0804">Transcription</keyword>
<keyword id="KW-0805">Transcription regulation</keyword>
<name>Y1030_ORYSJ</name>
<comment type="subcellular location">
    <subcellularLocation>
        <location evidence="1">Nucleus</location>
    </subcellularLocation>
</comment>
<comment type="sequence caution" evidence="3">
    <conflict type="erroneous gene model prediction">
        <sequence resource="EMBL-CDS" id="BAF26260"/>
    </conflict>
</comment>
<evidence type="ECO:0000255" key="1">
    <source>
        <dbReference type="PROSITE-ProRule" id="PRU00326"/>
    </source>
</evidence>
<evidence type="ECO:0000256" key="2">
    <source>
        <dbReference type="SAM" id="MobiDB-lite"/>
    </source>
</evidence>
<evidence type="ECO:0000305" key="3"/>
<gene>
    <name type="ordered locus">Os10g0323000</name>
    <name type="ordered locus">LOC_Os10g17630</name>
    <name type="ORF">OsJ_31059</name>
    <name type="ORF">OSJNBa0065C16.16</name>
</gene>
<proteinExistence type="evidence at transcript level"/>
<organism>
    <name type="scientific">Oryza sativa subsp. japonica</name>
    <name type="common">Rice</name>
    <dbReference type="NCBI Taxonomy" id="39947"/>
    <lineage>
        <taxon>Eukaryota</taxon>
        <taxon>Viridiplantae</taxon>
        <taxon>Streptophyta</taxon>
        <taxon>Embryophyta</taxon>
        <taxon>Tracheophyta</taxon>
        <taxon>Spermatophyta</taxon>
        <taxon>Magnoliopsida</taxon>
        <taxon>Liliopsida</taxon>
        <taxon>Poales</taxon>
        <taxon>Poaceae</taxon>
        <taxon>BOP clade</taxon>
        <taxon>Oryzoideae</taxon>
        <taxon>Oryzeae</taxon>
        <taxon>Oryzinae</taxon>
        <taxon>Oryza</taxon>
        <taxon>Oryza sativa</taxon>
    </lineage>
</organism>
<accession>Q7XFU9</accession>
<accession>Q0IYF5</accession>
<accession>Q94HQ5</accession>
<sequence length="272" mass="30761">MVPDQDGELRHDVCSLSTSLRLTAHVTSSIVHEQSSNIRYGENRKHGQRYAYHEPLPPEIVARCNGHDGKHLTLVTRNSKPVNVRLEKRGQSFYISKGWKKFVELTDLRVGQCVRFSVSSPSTLDLLILDKHGTSLAIPPSKRDLKLKSKRSTHQDSKGHPSNTDPGPSRIINRRVTKSESSANTQLLVQYFSKRYPIDHLEQLMTGRTEDIEVQTLVGPSVNMVLHTSTDHRCNLKKGWTDFALSNGIKLNTVCIFHFYKTTHLGVIVDIF</sequence>
<protein>
    <recommendedName>
        <fullName>B3 domain-containing protein Os10g0323000</fullName>
    </recommendedName>
</protein>
<feature type="chain" id="PRO_0000376984" description="B3 domain-containing protein Os10g0323000">
    <location>
        <begin position="1"/>
        <end position="272"/>
    </location>
</feature>
<feature type="DNA-binding region" description="TF-B3 1" evidence="1">
    <location>
        <begin position="39"/>
        <end position="132"/>
    </location>
</feature>
<feature type="DNA-binding region" description="TF-B3 2" evidence="1">
    <location>
        <begin position="180"/>
        <end position="272"/>
    </location>
</feature>
<feature type="region of interest" description="Disordered" evidence="2">
    <location>
        <begin position="139"/>
        <end position="171"/>
    </location>
</feature>
<feature type="compositionally biased region" description="Basic and acidic residues" evidence="2">
    <location>
        <begin position="141"/>
        <end position="159"/>
    </location>
</feature>